<proteinExistence type="predicted"/>
<sequence>MRLTTKGRYAVTAMLDLALHAQNGPVSLADISERQGISLSYLEQLFAKLRRNSLVTSVRGPGGGYQLSRSMAAIQVAEVIDAVNESVDVTRCQGDRGCRSGEVCLTHYLWCDLSHQIHEFLSGISLADLVARSDVQDLVRLQDRRQGGGCPLPYAGKIEASAIE</sequence>
<accession>O69219</accession>
<protein>
    <recommendedName>
        <fullName>Putative HTH-type transcriptional regulator ORF2</fullName>
    </recommendedName>
</protein>
<name>YOR2_AZOVI</name>
<organism>
    <name type="scientific">Azotobacter vinelandii</name>
    <dbReference type="NCBI Taxonomy" id="354"/>
    <lineage>
        <taxon>Bacteria</taxon>
        <taxon>Pseudomonadati</taxon>
        <taxon>Pseudomonadota</taxon>
        <taxon>Gammaproteobacteria</taxon>
        <taxon>Pseudomonadales</taxon>
        <taxon>Pseudomonadaceae</taxon>
        <taxon>Azotobacter</taxon>
    </lineage>
</organism>
<keyword id="KW-0238">DNA-binding</keyword>
<evidence type="ECO:0000255" key="1">
    <source>
        <dbReference type="PROSITE-ProRule" id="PRU00540"/>
    </source>
</evidence>
<feature type="chain" id="PRO_0000109569" description="Putative HTH-type transcriptional regulator ORF2">
    <location>
        <begin position="1"/>
        <end position="164"/>
    </location>
</feature>
<feature type="domain" description="HTH rrf2-type" evidence="1">
    <location>
        <begin position="2"/>
        <end position="131"/>
    </location>
</feature>
<reference key="1">
    <citation type="journal article" date="1998" name="J. Biol. Chem.">
        <title>Assembly of iron-sulfur clusters. Identification of an iscSUA-hscBA-fdx gene cluster from Azotobacter vinelandii.</title>
        <authorList>
            <person name="Zheng L."/>
            <person name="Cash V.L."/>
            <person name="Flint D.H."/>
            <person name="Dean D.R."/>
        </authorList>
    </citation>
    <scope>NUCLEOTIDE SEQUENCE [GENOMIC DNA]</scope>
    <source>
        <strain>ATCC 13705 / OP1 / DSM 366 / NCIMB 11614 / LMG 3878 / UW</strain>
    </source>
</reference>
<dbReference type="EMBL" id="AF010139">
    <property type="protein sequence ID" value="AAC24480.1"/>
    <property type="molecule type" value="Genomic_DNA"/>
</dbReference>
<dbReference type="PIR" id="T44280">
    <property type="entry name" value="T44280"/>
</dbReference>
<dbReference type="RefSeq" id="WP_012702552.1">
    <property type="nucleotide sequence ID" value="NZ_FPKM01000003.1"/>
</dbReference>
<dbReference type="SMR" id="O69219"/>
<dbReference type="GeneID" id="88186984"/>
<dbReference type="OMA" id="RCMTHDL"/>
<dbReference type="GO" id="GO:0005829">
    <property type="term" value="C:cytosol"/>
    <property type="evidence" value="ECO:0007669"/>
    <property type="project" value="TreeGrafter"/>
</dbReference>
<dbReference type="GO" id="GO:0003700">
    <property type="term" value="F:DNA-binding transcription factor activity"/>
    <property type="evidence" value="ECO:0007669"/>
    <property type="project" value="InterPro"/>
</dbReference>
<dbReference type="GO" id="GO:0003690">
    <property type="term" value="F:double-stranded DNA binding"/>
    <property type="evidence" value="ECO:0007669"/>
    <property type="project" value="InterPro"/>
</dbReference>
<dbReference type="FunFam" id="1.10.10.10:FF:000026">
    <property type="entry name" value="HTH-type transcriptional regulator IscR"/>
    <property type="match status" value="1"/>
</dbReference>
<dbReference type="Gene3D" id="1.10.10.10">
    <property type="entry name" value="Winged helix-like DNA-binding domain superfamily/Winged helix DNA-binding domain"/>
    <property type="match status" value="1"/>
</dbReference>
<dbReference type="InterPro" id="IPR010242">
    <property type="entry name" value="TF_HTH_IscR"/>
</dbReference>
<dbReference type="InterPro" id="IPR030489">
    <property type="entry name" value="TR_Rrf2-type_CS"/>
</dbReference>
<dbReference type="InterPro" id="IPR000944">
    <property type="entry name" value="Tscrpt_reg_Rrf2"/>
</dbReference>
<dbReference type="InterPro" id="IPR036388">
    <property type="entry name" value="WH-like_DNA-bd_sf"/>
</dbReference>
<dbReference type="InterPro" id="IPR036390">
    <property type="entry name" value="WH_DNA-bd_sf"/>
</dbReference>
<dbReference type="NCBIfam" id="TIGR02010">
    <property type="entry name" value="IscR"/>
    <property type="match status" value="1"/>
</dbReference>
<dbReference type="NCBIfam" id="TIGR00738">
    <property type="entry name" value="rrf2_super"/>
    <property type="match status" value="1"/>
</dbReference>
<dbReference type="PANTHER" id="PTHR33221:SF5">
    <property type="entry name" value="HTH-TYPE TRANSCRIPTIONAL REGULATOR ISCR"/>
    <property type="match status" value="1"/>
</dbReference>
<dbReference type="PANTHER" id="PTHR33221">
    <property type="entry name" value="WINGED HELIX-TURN-HELIX TRANSCRIPTIONAL REGULATOR, RRF2 FAMILY"/>
    <property type="match status" value="1"/>
</dbReference>
<dbReference type="Pfam" id="PF02082">
    <property type="entry name" value="Rrf2"/>
    <property type="match status" value="1"/>
</dbReference>
<dbReference type="SUPFAM" id="SSF46785">
    <property type="entry name" value="Winged helix' DNA-binding domain"/>
    <property type="match status" value="1"/>
</dbReference>
<dbReference type="PROSITE" id="PS01332">
    <property type="entry name" value="HTH_RRF2_1"/>
    <property type="match status" value="1"/>
</dbReference>
<dbReference type="PROSITE" id="PS51197">
    <property type="entry name" value="HTH_RRF2_2"/>
    <property type="match status" value="1"/>
</dbReference>